<organism>
    <name type="scientific">Shewanella woodyi (strain ATCC 51908 / MS32)</name>
    <dbReference type="NCBI Taxonomy" id="392500"/>
    <lineage>
        <taxon>Bacteria</taxon>
        <taxon>Pseudomonadati</taxon>
        <taxon>Pseudomonadota</taxon>
        <taxon>Gammaproteobacteria</taxon>
        <taxon>Alteromonadales</taxon>
        <taxon>Shewanellaceae</taxon>
        <taxon>Shewanella</taxon>
    </lineage>
</organism>
<dbReference type="EMBL" id="CP000961">
    <property type="protein sequence ID" value="ACA86322.1"/>
    <property type="molecule type" value="Genomic_DNA"/>
</dbReference>
<dbReference type="RefSeq" id="WP_012324668.1">
    <property type="nucleotide sequence ID" value="NC_010506.1"/>
</dbReference>
<dbReference type="SMR" id="B1KRB5"/>
<dbReference type="STRING" id="392500.Swoo_2038"/>
<dbReference type="KEGG" id="swd:Swoo_2038"/>
<dbReference type="eggNOG" id="COG0333">
    <property type="taxonomic scope" value="Bacteria"/>
</dbReference>
<dbReference type="HOGENOM" id="CLU_129084_2_1_6"/>
<dbReference type="Proteomes" id="UP000002168">
    <property type="component" value="Chromosome"/>
</dbReference>
<dbReference type="GO" id="GO:0015934">
    <property type="term" value="C:large ribosomal subunit"/>
    <property type="evidence" value="ECO:0007669"/>
    <property type="project" value="InterPro"/>
</dbReference>
<dbReference type="GO" id="GO:0003735">
    <property type="term" value="F:structural constituent of ribosome"/>
    <property type="evidence" value="ECO:0007669"/>
    <property type="project" value="InterPro"/>
</dbReference>
<dbReference type="GO" id="GO:0006412">
    <property type="term" value="P:translation"/>
    <property type="evidence" value="ECO:0007669"/>
    <property type="project" value="UniProtKB-UniRule"/>
</dbReference>
<dbReference type="HAMAP" id="MF_00340">
    <property type="entry name" value="Ribosomal_bL32"/>
    <property type="match status" value="1"/>
</dbReference>
<dbReference type="InterPro" id="IPR002677">
    <property type="entry name" value="Ribosomal_bL32"/>
</dbReference>
<dbReference type="InterPro" id="IPR044957">
    <property type="entry name" value="Ribosomal_bL32_bact"/>
</dbReference>
<dbReference type="InterPro" id="IPR011332">
    <property type="entry name" value="Ribosomal_zn-bd"/>
</dbReference>
<dbReference type="NCBIfam" id="TIGR01031">
    <property type="entry name" value="rpmF_bact"/>
    <property type="match status" value="1"/>
</dbReference>
<dbReference type="PANTHER" id="PTHR35534">
    <property type="entry name" value="50S RIBOSOMAL PROTEIN L32"/>
    <property type="match status" value="1"/>
</dbReference>
<dbReference type="PANTHER" id="PTHR35534:SF1">
    <property type="entry name" value="LARGE RIBOSOMAL SUBUNIT PROTEIN BL32"/>
    <property type="match status" value="1"/>
</dbReference>
<dbReference type="Pfam" id="PF01783">
    <property type="entry name" value="Ribosomal_L32p"/>
    <property type="match status" value="1"/>
</dbReference>
<dbReference type="SUPFAM" id="SSF57829">
    <property type="entry name" value="Zn-binding ribosomal proteins"/>
    <property type="match status" value="1"/>
</dbReference>
<comment type="similarity">
    <text evidence="1">Belongs to the bacterial ribosomal protein bL32 family.</text>
</comment>
<keyword id="KW-1185">Reference proteome</keyword>
<keyword id="KW-0687">Ribonucleoprotein</keyword>
<keyword id="KW-0689">Ribosomal protein</keyword>
<proteinExistence type="inferred from homology"/>
<sequence length="56" mass="6311">MAVQQNKKSRSKRGMRRSHDSLSTAQLSVDATSGELHRRHNVTADGFYRGVKVINK</sequence>
<accession>B1KRB5</accession>
<protein>
    <recommendedName>
        <fullName evidence="1">Large ribosomal subunit protein bL32</fullName>
    </recommendedName>
    <alternativeName>
        <fullName evidence="3">50S ribosomal protein L32</fullName>
    </alternativeName>
</protein>
<feature type="chain" id="PRO_1000120172" description="Large ribosomal subunit protein bL32">
    <location>
        <begin position="1"/>
        <end position="56"/>
    </location>
</feature>
<feature type="region of interest" description="Disordered" evidence="2">
    <location>
        <begin position="1"/>
        <end position="38"/>
    </location>
</feature>
<feature type="compositionally biased region" description="Basic residues" evidence="2">
    <location>
        <begin position="7"/>
        <end position="16"/>
    </location>
</feature>
<feature type="compositionally biased region" description="Polar residues" evidence="2">
    <location>
        <begin position="21"/>
        <end position="31"/>
    </location>
</feature>
<name>RL32_SHEWM</name>
<gene>
    <name evidence="1" type="primary">rpmF</name>
    <name type="ordered locus">Swoo_2038</name>
</gene>
<reference key="1">
    <citation type="submission" date="2008-02" db="EMBL/GenBank/DDBJ databases">
        <title>Complete sequence of Shewanella woodyi ATCC 51908.</title>
        <authorList>
            <consortium name="US DOE Joint Genome Institute"/>
            <person name="Copeland A."/>
            <person name="Lucas S."/>
            <person name="Lapidus A."/>
            <person name="Glavina del Rio T."/>
            <person name="Dalin E."/>
            <person name="Tice H."/>
            <person name="Bruce D."/>
            <person name="Goodwin L."/>
            <person name="Pitluck S."/>
            <person name="Sims D."/>
            <person name="Brettin T."/>
            <person name="Detter J.C."/>
            <person name="Han C."/>
            <person name="Kuske C.R."/>
            <person name="Schmutz J."/>
            <person name="Larimer F."/>
            <person name="Land M."/>
            <person name="Hauser L."/>
            <person name="Kyrpides N."/>
            <person name="Lykidis A."/>
            <person name="Zhao J.-S."/>
            <person name="Richardson P."/>
        </authorList>
    </citation>
    <scope>NUCLEOTIDE SEQUENCE [LARGE SCALE GENOMIC DNA]</scope>
    <source>
        <strain>ATCC 51908 / MS32</strain>
    </source>
</reference>
<evidence type="ECO:0000255" key="1">
    <source>
        <dbReference type="HAMAP-Rule" id="MF_00340"/>
    </source>
</evidence>
<evidence type="ECO:0000256" key="2">
    <source>
        <dbReference type="SAM" id="MobiDB-lite"/>
    </source>
</evidence>
<evidence type="ECO:0000305" key="3"/>